<proteinExistence type="evidence at protein level"/>
<name>GOLI4_MOUSE</name>
<dbReference type="EMBL" id="AK048434">
    <property type="protein sequence ID" value="BAC33335.1"/>
    <property type="molecule type" value="mRNA"/>
</dbReference>
<dbReference type="EMBL" id="AK050346">
    <property type="protein sequence ID" value="BAC34202.1"/>
    <property type="molecule type" value="mRNA"/>
</dbReference>
<dbReference type="EMBL" id="BC086642">
    <property type="protein sequence ID" value="AAH86642.1"/>
    <property type="molecule type" value="mRNA"/>
</dbReference>
<dbReference type="EMBL" id="BC089354">
    <property type="protein sequence ID" value="AAH89354.1"/>
    <property type="molecule type" value="mRNA"/>
</dbReference>
<dbReference type="CCDS" id="CCDS17416.1"/>
<dbReference type="RefSeq" id="NP_780402.1">
    <property type="nucleotide sequence ID" value="NM_175193.6"/>
</dbReference>
<dbReference type="SMR" id="Q8BXA1"/>
<dbReference type="BioGRID" id="215783">
    <property type="interactions" value="2"/>
</dbReference>
<dbReference type="FunCoup" id="Q8BXA1">
    <property type="interactions" value="951"/>
</dbReference>
<dbReference type="STRING" id="10090.ENSMUSP00000114006"/>
<dbReference type="GlyCosmos" id="Q8BXA1">
    <property type="glycosylation" value="1 site, No reported glycans"/>
</dbReference>
<dbReference type="GlyGen" id="Q8BXA1">
    <property type="glycosylation" value="1 site, 1 N-linked glycan (1 site)"/>
</dbReference>
<dbReference type="iPTMnet" id="Q8BXA1"/>
<dbReference type="PhosphoSitePlus" id="Q8BXA1"/>
<dbReference type="SwissPalm" id="Q8BXA1"/>
<dbReference type="CPTAC" id="non-CPTAC-4030"/>
<dbReference type="jPOST" id="Q8BXA1"/>
<dbReference type="PaxDb" id="10090-ENSMUSP00000048997"/>
<dbReference type="PeptideAtlas" id="Q8BXA1"/>
<dbReference type="ProteomicsDB" id="267646"/>
<dbReference type="Pumba" id="Q8BXA1"/>
<dbReference type="Antibodypedia" id="952">
    <property type="antibodies" value="128 antibodies from 20 providers"/>
</dbReference>
<dbReference type="DNASU" id="73124"/>
<dbReference type="Ensembl" id="ENSMUST00000038563.14">
    <property type="protein sequence ID" value="ENSMUSP00000048997.8"/>
    <property type="gene ID" value="ENSMUSG00000034109.17"/>
</dbReference>
<dbReference type="GeneID" id="73124"/>
<dbReference type="KEGG" id="mmu:73124"/>
<dbReference type="UCSC" id="uc008pnf.2">
    <property type="organism name" value="mouse"/>
</dbReference>
<dbReference type="AGR" id="MGI:1920374"/>
<dbReference type="CTD" id="27333"/>
<dbReference type="MGI" id="MGI:1920374">
    <property type="gene designation" value="Golim4"/>
</dbReference>
<dbReference type="VEuPathDB" id="HostDB:ENSMUSG00000034109"/>
<dbReference type="eggNOG" id="ENOG502R4Q5">
    <property type="taxonomic scope" value="Eukaryota"/>
</dbReference>
<dbReference type="GeneTree" id="ENSGT00390000004096"/>
<dbReference type="InParanoid" id="Q8BXA1"/>
<dbReference type="OrthoDB" id="6288648at2759"/>
<dbReference type="PhylomeDB" id="Q8BXA1"/>
<dbReference type="TreeFam" id="TF333101"/>
<dbReference type="BioGRID-ORCS" id="73124">
    <property type="hits" value="5 hits in 79 CRISPR screens"/>
</dbReference>
<dbReference type="ChiTaRS" id="Golim4">
    <property type="organism name" value="mouse"/>
</dbReference>
<dbReference type="PRO" id="PR:Q8BXA1"/>
<dbReference type="Proteomes" id="UP000000589">
    <property type="component" value="Chromosome 3"/>
</dbReference>
<dbReference type="RNAct" id="Q8BXA1">
    <property type="molecule type" value="protein"/>
</dbReference>
<dbReference type="Bgee" id="ENSMUSG00000034109">
    <property type="expression patterns" value="Expressed in vault of skull and 253 other cell types or tissues"/>
</dbReference>
<dbReference type="ExpressionAtlas" id="Q8BXA1">
    <property type="expression patterns" value="baseline and differential"/>
</dbReference>
<dbReference type="GO" id="GO:0010008">
    <property type="term" value="C:endosome membrane"/>
    <property type="evidence" value="ECO:0007669"/>
    <property type="project" value="UniProtKB-SubCell"/>
</dbReference>
<dbReference type="GO" id="GO:0005794">
    <property type="term" value="C:Golgi apparatus"/>
    <property type="evidence" value="ECO:0000266"/>
    <property type="project" value="MGI"/>
</dbReference>
<dbReference type="GO" id="GO:0032580">
    <property type="term" value="C:Golgi cisterna membrane"/>
    <property type="evidence" value="ECO:0007669"/>
    <property type="project" value="UniProtKB-SubCell"/>
</dbReference>
<dbReference type="GO" id="GO:0000139">
    <property type="term" value="C:Golgi membrane"/>
    <property type="evidence" value="ECO:0007669"/>
    <property type="project" value="InterPro"/>
</dbReference>
<dbReference type="GO" id="GO:0016020">
    <property type="term" value="C:membrane"/>
    <property type="evidence" value="ECO:0000266"/>
    <property type="project" value="MGI"/>
</dbReference>
<dbReference type="InterPro" id="IPR042336">
    <property type="entry name" value="GOLIM4"/>
</dbReference>
<dbReference type="PANTHER" id="PTHR22909">
    <property type="entry name" value="GOLGI INTEGRAL MEMBRANE PROTEIN 4"/>
    <property type="match status" value="1"/>
</dbReference>
<dbReference type="PANTHER" id="PTHR22909:SF22">
    <property type="entry name" value="GOLGI INTEGRAL MEMBRANE PROTEIN 4"/>
    <property type="match status" value="1"/>
</dbReference>
<reference key="1">
    <citation type="journal article" date="2005" name="Science">
        <title>The transcriptional landscape of the mammalian genome.</title>
        <authorList>
            <person name="Carninci P."/>
            <person name="Kasukawa T."/>
            <person name="Katayama S."/>
            <person name="Gough J."/>
            <person name="Frith M.C."/>
            <person name="Maeda N."/>
            <person name="Oyama R."/>
            <person name="Ravasi T."/>
            <person name="Lenhard B."/>
            <person name="Wells C."/>
            <person name="Kodzius R."/>
            <person name="Shimokawa K."/>
            <person name="Bajic V.B."/>
            <person name="Brenner S.E."/>
            <person name="Batalov S."/>
            <person name="Forrest A.R."/>
            <person name="Zavolan M."/>
            <person name="Davis M.J."/>
            <person name="Wilming L.G."/>
            <person name="Aidinis V."/>
            <person name="Allen J.E."/>
            <person name="Ambesi-Impiombato A."/>
            <person name="Apweiler R."/>
            <person name="Aturaliya R.N."/>
            <person name="Bailey T.L."/>
            <person name="Bansal M."/>
            <person name="Baxter L."/>
            <person name="Beisel K.W."/>
            <person name="Bersano T."/>
            <person name="Bono H."/>
            <person name="Chalk A.M."/>
            <person name="Chiu K.P."/>
            <person name="Choudhary V."/>
            <person name="Christoffels A."/>
            <person name="Clutterbuck D.R."/>
            <person name="Crowe M.L."/>
            <person name="Dalla E."/>
            <person name="Dalrymple B.P."/>
            <person name="de Bono B."/>
            <person name="Della Gatta G."/>
            <person name="di Bernardo D."/>
            <person name="Down T."/>
            <person name="Engstrom P."/>
            <person name="Fagiolini M."/>
            <person name="Faulkner G."/>
            <person name="Fletcher C.F."/>
            <person name="Fukushima T."/>
            <person name="Furuno M."/>
            <person name="Futaki S."/>
            <person name="Gariboldi M."/>
            <person name="Georgii-Hemming P."/>
            <person name="Gingeras T.R."/>
            <person name="Gojobori T."/>
            <person name="Green R.E."/>
            <person name="Gustincich S."/>
            <person name="Harbers M."/>
            <person name="Hayashi Y."/>
            <person name="Hensch T.K."/>
            <person name="Hirokawa N."/>
            <person name="Hill D."/>
            <person name="Huminiecki L."/>
            <person name="Iacono M."/>
            <person name="Ikeo K."/>
            <person name="Iwama A."/>
            <person name="Ishikawa T."/>
            <person name="Jakt M."/>
            <person name="Kanapin A."/>
            <person name="Katoh M."/>
            <person name="Kawasawa Y."/>
            <person name="Kelso J."/>
            <person name="Kitamura H."/>
            <person name="Kitano H."/>
            <person name="Kollias G."/>
            <person name="Krishnan S.P."/>
            <person name="Kruger A."/>
            <person name="Kummerfeld S.K."/>
            <person name="Kurochkin I.V."/>
            <person name="Lareau L.F."/>
            <person name="Lazarevic D."/>
            <person name="Lipovich L."/>
            <person name="Liu J."/>
            <person name="Liuni S."/>
            <person name="McWilliam S."/>
            <person name="Madan Babu M."/>
            <person name="Madera M."/>
            <person name="Marchionni L."/>
            <person name="Matsuda H."/>
            <person name="Matsuzawa S."/>
            <person name="Miki H."/>
            <person name="Mignone F."/>
            <person name="Miyake S."/>
            <person name="Morris K."/>
            <person name="Mottagui-Tabar S."/>
            <person name="Mulder N."/>
            <person name="Nakano N."/>
            <person name="Nakauchi H."/>
            <person name="Ng P."/>
            <person name="Nilsson R."/>
            <person name="Nishiguchi S."/>
            <person name="Nishikawa S."/>
            <person name="Nori F."/>
            <person name="Ohara O."/>
            <person name="Okazaki Y."/>
            <person name="Orlando V."/>
            <person name="Pang K.C."/>
            <person name="Pavan W.J."/>
            <person name="Pavesi G."/>
            <person name="Pesole G."/>
            <person name="Petrovsky N."/>
            <person name="Piazza S."/>
            <person name="Reed J."/>
            <person name="Reid J.F."/>
            <person name="Ring B.Z."/>
            <person name="Ringwald M."/>
            <person name="Rost B."/>
            <person name="Ruan Y."/>
            <person name="Salzberg S.L."/>
            <person name="Sandelin A."/>
            <person name="Schneider C."/>
            <person name="Schoenbach C."/>
            <person name="Sekiguchi K."/>
            <person name="Semple C.A."/>
            <person name="Seno S."/>
            <person name="Sessa L."/>
            <person name="Sheng Y."/>
            <person name="Shibata Y."/>
            <person name="Shimada H."/>
            <person name="Shimada K."/>
            <person name="Silva D."/>
            <person name="Sinclair B."/>
            <person name="Sperling S."/>
            <person name="Stupka E."/>
            <person name="Sugiura K."/>
            <person name="Sultana R."/>
            <person name="Takenaka Y."/>
            <person name="Taki K."/>
            <person name="Tammoja K."/>
            <person name="Tan S.L."/>
            <person name="Tang S."/>
            <person name="Taylor M.S."/>
            <person name="Tegner J."/>
            <person name="Teichmann S.A."/>
            <person name="Ueda H.R."/>
            <person name="van Nimwegen E."/>
            <person name="Verardo R."/>
            <person name="Wei C.L."/>
            <person name="Yagi K."/>
            <person name="Yamanishi H."/>
            <person name="Zabarovsky E."/>
            <person name="Zhu S."/>
            <person name="Zimmer A."/>
            <person name="Hide W."/>
            <person name="Bult C."/>
            <person name="Grimmond S.M."/>
            <person name="Teasdale R.D."/>
            <person name="Liu E.T."/>
            <person name="Brusic V."/>
            <person name="Quackenbush J."/>
            <person name="Wahlestedt C."/>
            <person name="Mattick J.S."/>
            <person name="Hume D.A."/>
            <person name="Kai C."/>
            <person name="Sasaki D."/>
            <person name="Tomaru Y."/>
            <person name="Fukuda S."/>
            <person name="Kanamori-Katayama M."/>
            <person name="Suzuki M."/>
            <person name="Aoki J."/>
            <person name="Arakawa T."/>
            <person name="Iida J."/>
            <person name="Imamura K."/>
            <person name="Itoh M."/>
            <person name="Kato T."/>
            <person name="Kawaji H."/>
            <person name="Kawagashira N."/>
            <person name="Kawashima T."/>
            <person name="Kojima M."/>
            <person name="Kondo S."/>
            <person name="Konno H."/>
            <person name="Nakano K."/>
            <person name="Ninomiya N."/>
            <person name="Nishio T."/>
            <person name="Okada M."/>
            <person name="Plessy C."/>
            <person name="Shibata K."/>
            <person name="Shiraki T."/>
            <person name="Suzuki S."/>
            <person name="Tagami M."/>
            <person name="Waki K."/>
            <person name="Watahiki A."/>
            <person name="Okamura-Oho Y."/>
            <person name="Suzuki H."/>
            <person name="Kawai J."/>
            <person name="Hayashizaki Y."/>
        </authorList>
    </citation>
    <scope>NUCLEOTIDE SEQUENCE [LARGE SCALE MRNA]</scope>
    <source>
        <strain>C57BL/6J</strain>
        <tissue>Head</tissue>
        <tissue>Liver</tissue>
    </source>
</reference>
<reference key="2">
    <citation type="journal article" date="2004" name="Genome Res.">
        <title>The status, quality, and expansion of the NIH full-length cDNA project: the Mammalian Gene Collection (MGC).</title>
        <authorList>
            <consortium name="The MGC Project Team"/>
        </authorList>
    </citation>
    <scope>NUCLEOTIDE SEQUENCE [LARGE SCALE MRNA]</scope>
    <source>
        <strain>C57BL/6J</strain>
        <tissue>Fetal brain</tissue>
    </source>
</reference>
<reference key="3">
    <citation type="journal article" date="2006" name="Biol. Reprod.">
        <title>The identification of mouse sperm-surface-associated proteins and characterization of their ability to act as decapacitation factors.</title>
        <authorList>
            <person name="Nixon B."/>
            <person name="MacIntyre D.A."/>
            <person name="Mitchell L.A."/>
            <person name="Gibbs G.M."/>
            <person name="O'Bryan M."/>
            <person name="Aitken R.J."/>
        </authorList>
    </citation>
    <scope>IDENTIFICATION BY MASS SPECTROMETRY</scope>
    <scope>TISSUE SPECIFICITY</scope>
</reference>
<reference key="4">
    <citation type="journal article" date="2008" name="J. Proteome Res.">
        <title>Large-scale identification and evolution indexing of tyrosine phosphorylation sites from murine brain.</title>
        <authorList>
            <person name="Ballif B.A."/>
            <person name="Carey G.R."/>
            <person name="Sunyaev S.R."/>
            <person name="Gygi S.P."/>
        </authorList>
    </citation>
    <scope>PHOSPHORYLATION [LARGE SCALE ANALYSIS] AT TYR-633</scope>
    <scope>IDENTIFICATION BY MASS SPECTROMETRY [LARGE SCALE ANALYSIS]</scope>
    <source>
        <tissue>Brain</tissue>
    </source>
</reference>
<reference key="5">
    <citation type="journal article" date="2010" name="Cell">
        <title>A tissue-specific atlas of mouse protein phosphorylation and expression.</title>
        <authorList>
            <person name="Huttlin E.L."/>
            <person name="Jedrychowski M.P."/>
            <person name="Elias J.E."/>
            <person name="Goswami T."/>
            <person name="Rad R."/>
            <person name="Beausoleil S.A."/>
            <person name="Villen J."/>
            <person name="Haas W."/>
            <person name="Sowa M.E."/>
            <person name="Gygi S.P."/>
        </authorList>
    </citation>
    <scope>IDENTIFICATION BY MASS SPECTROMETRY [LARGE SCALE ANALYSIS]</scope>
    <source>
        <tissue>Brown adipose tissue</tissue>
        <tissue>Heart</tissue>
        <tissue>Liver</tissue>
        <tissue>Lung</tissue>
        <tissue>Pancreas</tissue>
        <tissue>Spleen</tissue>
        <tissue>Testis</tissue>
    </source>
</reference>
<accession>Q8BXA1</accession>
<accession>Q8BWP9</accession>
<organism>
    <name type="scientific">Mus musculus</name>
    <name type="common">Mouse</name>
    <dbReference type="NCBI Taxonomy" id="10090"/>
    <lineage>
        <taxon>Eukaryota</taxon>
        <taxon>Metazoa</taxon>
        <taxon>Chordata</taxon>
        <taxon>Craniata</taxon>
        <taxon>Vertebrata</taxon>
        <taxon>Euteleostomi</taxon>
        <taxon>Mammalia</taxon>
        <taxon>Eutheria</taxon>
        <taxon>Euarchontoglires</taxon>
        <taxon>Glires</taxon>
        <taxon>Rodentia</taxon>
        <taxon>Myomorpha</taxon>
        <taxon>Muroidea</taxon>
        <taxon>Muridae</taxon>
        <taxon>Murinae</taxon>
        <taxon>Mus</taxon>
        <taxon>Mus</taxon>
    </lineage>
</organism>
<gene>
    <name type="primary">Golim4</name>
    <name type="synonym">Df10</name>
    <name type="synonym">Golph4</name>
</gene>
<feature type="initiator methionine" description="Removed" evidence="2">
    <location>
        <position position="1"/>
    </location>
</feature>
<feature type="chain" id="PRO_0000285098" description="Golgi integral membrane protein 4">
    <location>
        <begin position="2"/>
        <end position="655"/>
    </location>
</feature>
<feature type="topological domain" description="Cytoplasmic" evidence="4">
    <location>
        <begin position="2"/>
        <end position="12"/>
    </location>
</feature>
<feature type="transmembrane region" description="Helical; Signal-anchor for type II membrane protein" evidence="4">
    <location>
        <begin position="13"/>
        <end position="33"/>
    </location>
</feature>
<feature type="topological domain" description="Lumenal" evidence="4">
    <location>
        <begin position="34"/>
        <end position="655"/>
    </location>
</feature>
<feature type="region of interest" description="Golgi targeting" evidence="1">
    <location>
        <begin position="38"/>
        <end position="107"/>
    </location>
</feature>
<feature type="region of interest" description="Endosome targeting" evidence="1">
    <location>
        <begin position="80"/>
        <end position="175"/>
    </location>
</feature>
<feature type="region of interest" description="Disordered" evidence="5">
    <location>
        <begin position="122"/>
        <end position="145"/>
    </location>
</feature>
<feature type="region of interest" description="Golgi targeting" evidence="1">
    <location>
        <begin position="176"/>
        <end position="220"/>
    </location>
</feature>
<feature type="region of interest" description="Disordered" evidence="5">
    <location>
        <begin position="256"/>
        <end position="275"/>
    </location>
</feature>
<feature type="region of interest" description="Disordered" evidence="5">
    <location>
        <begin position="285"/>
        <end position="655"/>
    </location>
</feature>
<feature type="coiled-coil region" evidence="4">
    <location>
        <begin position="66"/>
        <end position="216"/>
    </location>
</feature>
<feature type="compositionally biased region" description="Basic and acidic residues" evidence="5">
    <location>
        <begin position="123"/>
        <end position="145"/>
    </location>
</feature>
<feature type="compositionally biased region" description="Basic and acidic residues" evidence="5">
    <location>
        <begin position="261"/>
        <end position="270"/>
    </location>
</feature>
<feature type="compositionally biased region" description="Basic and acidic residues" evidence="5">
    <location>
        <begin position="290"/>
        <end position="307"/>
    </location>
</feature>
<feature type="compositionally biased region" description="Basic and acidic residues" evidence="5">
    <location>
        <begin position="319"/>
        <end position="328"/>
    </location>
</feature>
<feature type="compositionally biased region" description="Basic and acidic residues" evidence="5">
    <location>
        <begin position="348"/>
        <end position="360"/>
    </location>
</feature>
<feature type="compositionally biased region" description="Polar residues" evidence="5">
    <location>
        <begin position="361"/>
        <end position="370"/>
    </location>
</feature>
<feature type="compositionally biased region" description="Basic and acidic residues" evidence="5">
    <location>
        <begin position="381"/>
        <end position="398"/>
    </location>
</feature>
<feature type="compositionally biased region" description="Low complexity" evidence="5">
    <location>
        <begin position="399"/>
        <end position="423"/>
    </location>
</feature>
<feature type="compositionally biased region" description="Low complexity" evidence="5">
    <location>
        <begin position="433"/>
        <end position="442"/>
    </location>
</feature>
<feature type="compositionally biased region" description="Basic and acidic residues" evidence="5">
    <location>
        <begin position="468"/>
        <end position="508"/>
    </location>
</feature>
<feature type="compositionally biased region" description="Acidic residues" evidence="5">
    <location>
        <begin position="567"/>
        <end position="589"/>
    </location>
</feature>
<feature type="compositionally biased region" description="Basic and acidic residues" evidence="5">
    <location>
        <begin position="590"/>
        <end position="620"/>
    </location>
</feature>
<feature type="compositionally biased region" description="Acidic residues" evidence="5">
    <location>
        <begin position="633"/>
        <end position="642"/>
    </location>
</feature>
<feature type="modified residue" description="Phosphoserine" evidence="2">
    <location>
        <position position="328"/>
    </location>
</feature>
<feature type="modified residue" description="Phosphoserine" evidence="3">
    <location>
        <position position="540"/>
    </location>
</feature>
<feature type="modified residue" description="Phosphotyrosine" evidence="2">
    <location>
        <position position="576"/>
    </location>
</feature>
<feature type="modified residue" description="Phosphothreonine" evidence="2">
    <location>
        <position position="589"/>
    </location>
</feature>
<feature type="modified residue" description="Phosphotyrosine" evidence="8">
    <location>
        <position position="633"/>
    </location>
</feature>
<feature type="lipid moiety-binding region" description="N-myristoyl glycine" evidence="2">
    <location>
        <position position="2"/>
    </location>
</feature>
<feature type="glycosylation site" description="N-linked (GlcNAc...) asparagine" evidence="4">
    <location>
        <position position="229"/>
    </location>
</feature>
<evidence type="ECO:0000250" key="1"/>
<evidence type="ECO:0000250" key="2">
    <source>
        <dbReference type="UniProtKB" id="O00461"/>
    </source>
</evidence>
<evidence type="ECO:0000250" key="3">
    <source>
        <dbReference type="UniProtKB" id="Q5BJK8"/>
    </source>
</evidence>
<evidence type="ECO:0000255" key="4"/>
<evidence type="ECO:0000256" key="5">
    <source>
        <dbReference type="SAM" id="MobiDB-lite"/>
    </source>
</evidence>
<evidence type="ECO:0000269" key="6">
    <source>
    </source>
</evidence>
<evidence type="ECO:0000305" key="7"/>
<evidence type="ECO:0007744" key="8">
    <source>
    </source>
</evidence>
<comment type="function">
    <text evidence="1">Plays a role in endosome to Golgi protein trafficking; mediates protein transport along the late endosome-bypass pathway from the early endosome to the Golgi.</text>
</comment>
<comment type="subcellular location">
    <subcellularLocation>
        <location evidence="1">Golgi apparatus</location>
        <location evidence="1">Golgi stack membrane</location>
        <topology evidence="1">Single-pass type II membrane protein</topology>
    </subcellularLocation>
    <subcellularLocation>
        <location evidence="1">Endosome membrane</location>
        <topology evidence="1">Single-pass type II membrane protein</topology>
    </subcellularLocation>
    <subcellularLocation>
        <location evidence="2">Membrane</location>
        <topology evidence="2">Lipid-anchor</topology>
    </subcellularLocation>
    <text evidence="1">Localizes to cis and medial Golgi cisternae. Probably cycles between early Golgi and distal compartments like endosome (By similarity).</text>
</comment>
<comment type="tissue specificity">
    <text evidence="6">Expressed by spermatozoa (at protein level).</text>
</comment>
<comment type="PTM">
    <text evidence="1">Phosphorylated by c-AMP-dependent kinases most probably in its lumenal part.</text>
</comment>
<comment type="PTM">
    <text evidence="1">O-glycosylated; modified by sialic acid residues.</text>
</comment>
<comment type="PTM">
    <text evidence="1">N-glycosylated; N-glycans are of the complex type and modified by sialic acid residues.</text>
</comment>
<comment type="similarity">
    <text evidence="7">Belongs to the GOLIM4 family.</text>
</comment>
<protein>
    <recommendedName>
        <fullName>Golgi integral membrane protein 4</fullName>
    </recommendedName>
    <alternativeName>
        <fullName>Decapacitation factor 10</fullName>
    </alternativeName>
    <alternativeName>
        <fullName>Golgi phosphoprotein 4</fullName>
    </alternativeName>
</protein>
<sequence>MGNGMCSRKQKRIFQTLLLLTVVFGFLYGAMLYLELQTQLRKAEAVALKYQQHQDSLSAQLQVVYEHRSRLEKSLQKERLEHKKAKEDFLVYKLEAQETLNKGRQDSNSRYSALNVQHQMLKSQHEELRKQHSDLEEEHRKQGEDFSRTFNDHKQRYLQLQQEKEQELSKLKETVYNLREENRQLRKAHQDIHTQLQDVKTQVAEYKQLKDTLNRIPSFRNPDPVEQQNVTFPHGTHPPQGYNGREKLTGELQEVQPNHEAGPRRMEEKPLSSMQKDAGFQALEEQNQVEPREPEERQVEEEHRKALEEEEMEQVGQAEHLEEEHDPSPEEQDRDWRDQQGQNAAHLLDGHPQAEVEHSTKAATNFQSPYEEQLEQQRLAARRDEEAQRLREHQEALHQQRLHGQLLRQQQQQQFLAREMAQQKQVAHEDGQQQHQEQLRQQAHYNAVENDIAQGVEDQGIPEEEGGAYDRDNQRQDEAEGDPGNRQELREPGHQEGDPEVEADRAAVEDINPADDPNNQGEDEFEEAEQVREENLPEESEEQKQSEAKQGNVEMDEHLVMAGNPDQQEDNVDEQYQDEGEEEVQEDLTEEKKREMEHNVEETYGEHPDDKNNDGEEQGVHNRAHPKGRQEHYEEEEDEEDGAAVAEKSHRRAEM</sequence>
<keyword id="KW-0175">Coiled coil</keyword>
<keyword id="KW-0967">Endosome</keyword>
<keyword id="KW-0325">Glycoprotein</keyword>
<keyword id="KW-0333">Golgi apparatus</keyword>
<keyword id="KW-0449">Lipoprotein</keyword>
<keyword id="KW-0472">Membrane</keyword>
<keyword id="KW-0519">Myristate</keyword>
<keyword id="KW-0597">Phosphoprotein</keyword>
<keyword id="KW-1185">Reference proteome</keyword>
<keyword id="KW-0735">Signal-anchor</keyword>
<keyword id="KW-0812">Transmembrane</keyword>
<keyword id="KW-1133">Transmembrane helix</keyword>
<keyword id="KW-0813">Transport</keyword>